<keyword id="KW-0963">Cytoplasm</keyword>
<keyword id="KW-0479">Metal-binding</keyword>
<keyword id="KW-0749">Sporulation</keyword>
<keyword id="KW-0862">Zinc</keyword>
<keyword id="KW-0863">Zinc-finger</keyword>
<name>MUB1_ASPFC</name>
<sequence>MREVNFSIPNVNKASVNITTTLYDRRALDCTSTLPLINSLNHLAYLTTSSARIRDILTVDGGIERLVCILKEGRSRDLMEMWKWSLAFQCVVNIGVRGSESVRTRVVEADMVPVIATILDNYIKVVDKARARADSESQRQSSRHHSKAVPTSNDVSGRPSFLEQPLTAEQRTSRRHAPPSIEIPPQPFFQENHVADSNVLDVTSPSRVPMTSPPERSAFGQDVHHRRTNDGRFAHGNHRHRMQPLATALPSMDATDGFGLRPVRDNERLPSMLPGFHTGLTSQPDSPTTPNAPVQPRSSAQATIARQRPSLRQQQSASGESDDGNGDGSTMDEDPASTEAAEPIVGLQNRMDIDDVGDRDTILGGVSDSHDLTVTDPSEEQEAETFNITHRSTVDGSMINTDNAQNNAALGLSPTQAADNANSPALVPSPYSLYFRDRTTTAAHGVLTTMPRDEDVLMSLQLLAYVSKYCNLRSYFQHSHFVPKLKIDRELQMLEEGTSPIEFPEDEDEYLLPDDVNIFPLVEKFTVRHHSKDMQYWACVVMRNLCRKDESRGGIRQCAYYKCGKWEEFQRQFAKCRRCRRTKYCSKDCQKAAWVYHRHWCHTTP</sequence>
<feature type="chain" id="PRO_0000393322" description="MYND-type zinc finger protein samB">
    <location>
        <begin position="1"/>
        <end position="605"/>
    </location>
</feature>
<feature type="zinc finger region" description="MYND-type; degenerate" evidence="2">
    <location>
        <begin position="560"/>
        <end position="601"/>
    </location>
</feature>
<feature type="region of interest" description="Disordered" evidence="3">
    <location>
        <begin position="134"/>
        <end position="187"/>
    </location>
</feature>
<feature type="region of interest" description="Disordered" evidence="3">
    <location>
        <begin position="203"/>
        <end position="352"/>
    </location>
</feature>
<feature type="compositionally biased region" description="Polar residues" evidence="3">
    <location>
        <begin position="279"/>
        <end position="315"/>
    </location>
</feature>
<feature type="compositionally biased region" description="Acidic residues" evidence="3">
    <location>
        <begin position="320"/>
        <end position="336"/>
    </location>
</feature>
<feature type="binding site" evidence="2">
    <location>
        <position position="576"/>
    </location>
    <ligand>
        <name>Zn(2+)</name>
        <dbReference type="ChEBI" id="CHEBI:29105"/>
    </ligand>
</feature>
<feature type="binding site" evidence="2">
    <location>
        <position position="579"/>
    </location>
    <ligand>
        <name>Zn(2+)</name>
        <dbReference type="ChEBI" id="CHEBI:29105"/>
    </ligand>
</feature>
<feature type="binding site" evidence="2">
    <location>
        <position position="597"/>
    </location>
    <ligand>
        <name>Zn(2+)</name>
        <dbReference type="ChEBI" id="CHEBI:29105"/>
    </ligand>
</feature>
<feature type="binding site" evidence="2">
    <location>
        <position position="601"/>
    </location>
    <ligand>
        <name>Zn(2+)</name>
        <dbReference type="ChEBI" id="CHEBI:29105"/>
    </ligand>
</feature>
<evidence type="ECO:0000250" key="1"/>
<evidence type="ECO:0000255" key="2">
    <source>
        <dbReference type="PROSITE-ProRule" id="PRU00134"/>
    </source>
</evidence>
<evidence type="ECO:0000256" key="3">
    <source>
        <dbReference type="SAM" id="MobiDB-lite"/>
    </source>
</evidence>
<evidence type="ECO:0000305" key="4"/>
<gene>
    <name type="primary">samB</name>
    <name type="ORF">AFUB_059860</name>
</gene>
<protein>
    <recommendedName>
        <fullName>MYND-type zinc finger protein samB</fullName>
    </recommendedName>
    <alternativeName>
        <fullName>Suppressor of anucleate metulae protein B</fullName>
    </alternativeName>
</protein>
<accession>B0Y1D1</accession>
<comment type="function">
    <text evidence="1">Involved in determination of the onset of polarized growth and morphogenesis. Plays a role in the regulation of branching in hyphae and spore formation (By similarity).</text>
</comment>
<comment type="subcellular location">
    <subcellularLocation>
        <location evidence="1">Cytoplasm</location>
    </subcellularLocation>
</comment>
<comment type="similarity">
    <text evidence="4">Belongs to the MUB1/samB family.</text>
</comment>
<proteinExistence type="inferred from homology"/>
<dbReference type="EMBL" id="DS499597">
    <property type="protein sequence ID" value="EDP51961.1"/>
    <property type="molecule type" value="Genomic_DNA"/>
</dbReference>
<dbReference type="SMR" id="B0Y1D1"/>
<dbReference type="EnsemblFungi" id="EDP51961">
    <property type="protein sequence ID" value="EDP51961"/>
    <property type="gene ID" value="AFUB_059860"/>
</dbReference>
<dbReference type="VEuPathDB" id="FungiDB:AFUB_059860"/>
<dbReference type="HOGENOM" id="CLU_014851_0_0_1"/>
<dbReference type="OrthoDB" id="28295at5052"/>
<dbReference type="PhylomeDB" id="B0Y1D1"/>
<dbReference type="Proteomes" id="UP000001699">
    <property type="component" value="Unassembled WGS sequence"/>
</dbReference>
<dbReference type="GO" id="GO:0005737">
    <property type="term" value="C:cytoplasm"/>
    <property type="evidence" value="ECO:0007669"/>
    <property type="project" value="UniProtKB-SubCell"/>
</dbReference>
<dbReference type="GO" id="GO:1990304">
    <property type="term" value="C:MUB1-RAD6-UBR2 ubiquitin ligase complex"/>
    <property type="evidence" value="ECO:0007669"/>
    <property type="project" value="TreeGrafter"/>
</dbReference>
<dbReference type="GO" id="GO:0008270">
    <property type="term" value="F:zinc ion binding"/>
    <property type="evidence" value="ECO:0007669"/>
    <property type="project" value="UniProtKB-KW"/>
</dbReference>
<dbReference type="GO" id="GO:0007163">
    <property type="term" value="P:establishment or maintenance of cell polarity"/>
    <property type="evidence" value="ECO:0007669"/>
    <property type="project" value="TreeGrafter"/>
</dbReference>
<dbReference type="GO" id="GO:1900735">
    <property type="term" value="P:positive regulation of flocculation"/>
    <property type="evidence" value="ECO:0007669"/>
    <property type="project" value="EnsemblFungi"/>
</dbReference>
<dbReference type="GO" id="GO:0030435">
    <property type="term" value="P:sporulation resulting in formation of a cellular spore"/>
    <property type="evidence" value="ECO:0007669"/>
    <property type="project" value="UniProtKB-KW"/>
</dbReference>
<dbReference type="GO" id="GO:0006511">
    <property type="term" value="P:ubiquitin-dependent protein catabolic process"/>
    <property type="evidence" value="ECO:0007669"/>
    <property type="project" value="TreeGrafter"/>
</dbReference>
<dbReference type="FunFam" id="6.10.140.2220:FF:000003">
    <property type="entry name" value="MYND-type zinc finger protein"/>
    <property type="match status" value="1"/>
</dbReference>
<dbReference type="Gene3D" id="6.10.140.2220">
    <property type="match status" value="1"/>
</dbReference>
<dbReference type="InterPro" id="IPR016024">
    <property type="entry name" value="ARM-type_fold"/>
</dbReference>
<dbReference type="InterPro" id="IPR051664">
    <property type="entry name" value="MYND-type_zinc_finger"/>
</dbReference>
<dbReference type="InterPro" id="IPR002893">
    <property type="entry name" value="Znf_MYND"/>
</dbReference>
<dbReference type="PANTHER" id="PTHR47442">
    <property type="entry name" value="MYND-TYPE ZINC FINGER PROTEIN MUB1"/>
    <property type="match status" value="1"/>
</dbReference>
<dbReference type="PANTHER" id="PTHR47442:SF1">
    <property type="entry name" value="MYND-TYPE ZINC FINGER PROTEIN MUB1"/>
    <property type="match status" value="1"/>
</dbReference>
<dbReference type="Pfam" id="PF01753">
    <property type="entry name" value="zf-MYND"/>
    <property type="match status" value="1"/>
</dbReference>
<dbReference type="SUPFAM" id="SSF48371">
    <property type="entry name" value="ARM repeat"/>
    <property type="match status" value="1"/>
</dbReference>
<dbReference type="SUPFAM" id="SSF144232">
    <property type="entry name" value="HIT/MYND zinc finger-like"/>
    <property type="match status" value="1"/>
</dbReference>
<dbReference type="PROSITE" id="PS01360">
    <property type="entry name" value="ZF_MYND_1"/>
    <property type="match status" value="1"/>
</dbReference>
<dbReference type="PROSITE" id="PS50865">
    <property type="entry name" value="ZF_MYND_2"/>
    <property type="match status" value="1"/>
</dbReference>
<organism>
    <name type="scientific">Aspergillus fumigatus (strain CBS 144.89 / FGSC A1163 / CEA10)</name>
    <name type="common">Neosartorya fumigata</name>
    <dbReference type="NCBI Taxonomy" id="451804"/>
    <lineage>
        <taxon>Eukaryota</taxon>
        <taxon>Fungi</taxon>
        <taxon>Dikarya</taxon>
        <taxon>Ascomycota</taxon>
        <taxon>Pezizomycotina</taxon>
        <taxon>Eurotiomycetes</taxon>
        <taxon>Eurotiomycetidae</taxon>
        <taxon>Eurotiales</taxon>
        <taxon>Aspergillaceae</taxon>
        <taxon>Aspergillus</taxon>
        <taxon>Aspergillus subgen. Fumigati</taxon>
    </lineage>
</organism>
<reference key="1">
    <citation type="journal article" date="2008" name="PLoS Genet.">
        <title>Genomic islands in the pathogenic filamentous fungus Aspergillus fumigatus.</title>
        <authorList>
            <person name="Fedorova N.D."/>
            <person name="Khaldi N."/>
            <person name="Joardar V.S."/>
            <person name="Maiti R."/>
            <person name="Amedeo P."/>
            <person name="Anderson M.J."/>
            <person name="Crabtree J."/>
            <person name="Silva J.C."/>
            <person name="Badger J.H."/>
            <person name="Albarraq A."/>
            <person name="Angiuoli S."/>
            <person name="Bussey H."/>
            <person name="Bowyer P."/>
            <person name="Cotty P.J."/>
            <person name="Dyer P.S."/>
            <person name="Egan A."/>
            <person name="Galens K."/>
            <person name="Fraser-Liggett C.M."/>
            <person name="Haas B.J."/>
            <person name="Inman J.M."/>
            <person name="Kent R."/>
            <person name="Lemieux S."/>
            <person name="Malavazi I."/>
            <person name="Orvis J."/>
            <person name="Roemer T."/>
            <person name="Ronning C.M."/>
            <person name="Sundaram J.P."/>
            <person name="Sutton G."/>
            <person name="Turner G."/>
            <person name="Venter J.C."/>
            <person name="White O.R."/>
            <person name="Whitty B.R."/>
            <person name="Youngman P."/>
            <person name="Wolfe K.H."/>
            <person name="Goldman G.H."/>
            <person name="Wortman J.R."/>
            <person name="Jiang B."/>
            <person name="Denning D.W."/>
            <person name="Nierman W.C."/>
        </authorList>
    </citation>
    <scope>NUCLEOTIDE SEQUENCE [LARGE SCALE GENOMIC DNA]</scope>
    <source>
        <strain>CBS 144.89 / FGSC A1163 / CEA10</strain>
    </source>
</reference>